<keyword id="KW-0067">ATP-binding</keyword>
<keyword id="KW-0963">Cytoplasm</keyword>
<keyword id="KW-0418">Kinase</keyword>
<keyword id="KW-0520">NAD</keyword>
<keyword id="KW-0521">NADP</keyword>
<keyword id="KW-0547">Nucleotide-binding</keyword>
<keyword id="KW-0808">Transferase</keyword>
<accession>A8GS48</accession>
<feature type="chain" id="PRO_1000005441" description="NAD kinase">
    <location>
        <begin position="1"/>
        <end position="255"/>
    </location>
</feature>
<feature type="active site" description="Proton acceptor" evidence="1">
    <location>
        <position position="44"/>
    </location>
</feature>
<feature type="binding site" evidence="1">
    <location>
        <begin position="44"/>
        <end position="45"/>
    </location>
    <ligand>
        <name>NAD(+)</name>
        <dbReference type="ChEBI" id="CHEBI:57540"/>
    </ligand>
</feature>
<feature type="binding site" evidence="1">
    <location>
        <position position="49"/>
    </location>
    <ligand>
        <name>NAD(+)</name>
        <dbReference type="ChEBI" id="CHEBI:57540"/>
    </ligand>
</feature>
<feature type="binding site" evidence="1">
    <location>
        <begin position="114"/>
        <end position="115"/>
    </location>
    <ligand>
        <name>NAD(+)</name>
        <dbReference type="ChEBI" id="CHEBI:57540"/>
    </ligand>
</feature>
<feature type="binding site" evidence="1">
    <location>
        <position position="144"/>
    </location>
    <ligand>
        <name>NAD(+)</name>
        <dbReference type="ChEBI" id="CHEBI:57540"/>
    </ligand>
</feature>
<feature type="binding site" evidence="1">
    <location>
        <position position="152"/>
    </location>
    <ligand>
        <name>NAD(+)</name>
        <dbReference type="ChEBI" id="CHEBI:57540"/>
    </ligand>
</feature>
<feature type="binding site" evidence="1">
    <location>
        <begin position="155"/>
        <end position="160"/>
    </location>
    <ligand>
        <name>NAD(+)</name>
        <dbReference type="ChEBI" id="CHEBI:57540"/>
    </ligand>
</feature>
<feature type="binding site" evidence="1">
    <location>
        <position position="216"/>
    </location>
    <ligand>
        <name>NAD(+)</name>
        <dbReference type="ChEBI" id="CHEBI:57540"/>
    </ligand>
</feature>
<organism>
    <name type="scientific">Rickettsia rickettsii (strain Sheila Smith)</name>
    <dbReference type="NCBI Taxonomy" id="392021"/>
    <lineage>
        <taxon>Bacteria</taxon>
        <taxon>Pseudomonadati</taxon>
        <taxon>Pseudomonadota</taxon>
        <taxon>Alphaproteobacteria</taxon>
        <taxon>Rickettsiales</taxon>
        <taxon>Rickettsiaceae</taxon>
        <taxon>Rickettsieae</taxon>
        <taxon>Rickettsia</taxon>
        <taxon>spotted fever group</taxon>
    </lineage>
</organism>
<dbReference type="EC" id="2.7.1.23" evidence="1"/>
<dbReference type="EMBL" id="CP000848">
    <property type="protein sequence ID" value="ABV76223.1"/>
    <property type="molecule type" value="Genomic_DNA"/>
</dbReference>
<dbReference type="RefSeq" id="WP_012150807.1">
    <property type="nucleotide sequence ID" value="NZ_CP121767.1"/>
</dbReference>
<dbReference type="SMR" id="A8GS48"/>
<dbReference type="GeneID" id="79937356"/>
<dbReference type="KEGG" id="rri:A1G_03460"/>
<dbReference type="HOGENOM" id="CLU_073319_0_0_5"/>
<dbReference type="Proteomes" id="UP000006832">
    <property type="component" value="Chromosome"/>
</dbReference>
<dbReference type="GO" id="GO:0005737">
    <property type="term" value="C:cytoplasm"/>
    <property type="evidence" value="ECO:0007669"/>
    <property type="project" value="UniProtKB-SubCell"/>
</dbReference>
<dbReference type="GO" id="GO:0005524">
    <property type="term" value="F:ATP binding"/>
    <property type="evidence" value="ECO:0007669"/>
    <property type="project" value="UniProtKB-KW"/>
</dbReference>
<dbReference type="GO" id="GO:0046872">
    <property type="term" value="F:metal ion binding"/>
    <property type="evidence" value="ECO:0007669"/>
    <property type="project" value="UniProtKB-UniRule"/>
</dbReference>
<dbReference type="GO" id="GO:0051287">
    <property type="term" value="F:NAD binding"/>
    <property type="evidence" value="ECO:0007669"/>
    <property type="project" value="UniProtKB-ARBA"/>
</dbReference>
<dbReference type="GO" id="GO:0003951">
    <property type="term" value="F:NAD+ kinase activity"/>
    <property type="evidence" value="ECO:0007669"/>
    <property type="project" value="UniProtKB-UniRule"/>
</dbReference>
<dbReference type="GO" id="GO:0019674">
    <property type="term" value="P:NAD metabolic process"/>
    <property type="evidence" value="ECO:0007669"/>
    <property type="project" value="InterPro"/>
</dbReference>
<dbReference type="GO" id="GO:0006741">
    <property type="term" value="P:NADP biosynthetic process"/>
    <property type="evidence" value="ECO:0007669"/>
    <property type="project" value="UniProtKB-UniRule"/>
</dbReference>
<dbReference type="Gene3D" id="3.40.50.10330">
    <property type="entry name" value="Probable inorganic polyphosphate/atp-NAD kinase, domain 1"/>
    <property type="match status" value="1"/>
</dbReference>
<dbReference type="Gene3D" id="2.60.200.30">
    <property type="entry name" value="Probable inorganic polyphosphate/atp-NAD kinase, domain 2"/>
    <property type="match status" value="1"/>
</dbReference>
<dbReference type="HAMAP" id="MF_00361">
    <property type="entry name" value="NAD_kinase"/>
    <property type="match status" value="1"/>
</dbReference>
<dbReference type="InterPro" id="IPR017438">
    <property type="entry name" value="ATP-NAD_kinase_N"/>
</dbReference>
<dbReference type="InterPro" id="IPR017437">
    <property type="entry name" value="ATP-NAD_kinase_PpnK-typ_C"/>
</dbReference>
<dbReference type="InterPro" id="IPR016064">
    <property type="entry name" value="NAD/diacylglycerol_kinase_sf"/>
</dbReference>
<dbReference type="InterPro" id="IPR002504">
    <property type="entry name" value="NADK"/>
</dbReference>
<dbReference type="NCBIfam" id="NF003406">
    <property type="entry name" value="PRK04761.1"/>
    <property type="match status" value="1"/>
</dbReference>
<dbReference type="PANTHER" id="PTHR20275">
    <property type="entry name" value="NAD KINASE"/>
    <property type="match status" value="1"/>
</dbReference>
<dbReference type="PANTHER" id="PTHR20275:SF0">
    <property type="entry name" value="NAD KINASE"/>
    <property type="match status" value="1"/>
</dbReference>
<dbReference type="Pfam" id="PF01513">
    <property type="entry name" value="NAD_kinase"/>
    <property type="match status" value="1"/>
</dbReference>
<dbReference type="Pfam" id="PF20143">
    <property type="entry name" value="NAD_kinase_C"/>
    <property type="match status" value="1"/>
</dbReference>
<dbReference type="SUPFAM" id="SSF111331">
    <property type="entry name" value="NAD kinase/diacylglycerol kinase-like"/>
    <property type="match status" value="1"/>
</dbReference>
<protein>
    <recommendedName>
        <fullName evidence="1">NAD kinase</fullName>
        <ecNumber evidence="1">2.7.1.23</ecNumber>
    </recommendedName>
    <alternativeName>
        <fullName evidence="1">ATP-dependent NAD kinase</fullName>
    </alternativeName>
</protein>
<gene>
    <name evidence="1" type="primary">nadK</name>
    <name type="ordered locus">A1G_03460</name>
</gene>
<evidence type="ECO:0000255" key="1">
    <source>
        <dbReference type="HAMAP-Rule" id="MF_00361"/>
    </source>
</evidence>
<sequence>MNINKIALIYNHNSKHLAIIEEIKKLYNYCKIEEAEVIIVIGGDGELLHNIHRYMHLNIPFYGVNLGSLGFLMNPLDTKKLLQNIHDSTVSILNPLLMQVADTNGQIYTALAINEVSIFRKTNQAAKFRIEVNGIERMNELVADGALVATPAGSSAYNLSASGPILPLESNMLCLTPICSFRPRRWHGALLLSSATIKFEILNTNKRPVNATADFQEFNNITNVTVKSTKDKPVKLLFNKNHTLEDRIIKEQFGG</sequence>
<reference key="1">
    <citation type="submission" date="2007-09" db="EMBL/GenBank/DDBJ databases">
        <title>Complete genome sequence of Rickettsia rickettsii.</title>
        <authorList>
            <person name="Madan A."/>
            <person name="Fahey J."/>
            <person name="Helton E."/>
            <person name="Ketteman M."/>
            <person name="Madan A."/>
            <person name="Rodrigues S."/>
            <person name="Sanchez A."/>
            <person name="Dasch G."/>
            <person name="Eremeeva M."/>
        </authorList>
    </citation>
    <scope>NUCLEOTIDE SEQUENCE [LARGE SCALE GENOMIC DNA]</scope>
    <source>
        <strain>Sheila Smith</strain>
    </source>
</reference>
<proteinExistence type="inferred from homology"/>
<comment type="function">
    <text evidence="1">Involved in the regulation of the intracellular balance of NAD and NADP, and is a key enzyme in the biosynthesis of NADP. Catalyzes specifically the phosphorylation on 2'-hydroxyl of the adenosine moiety of NAD to yield NADP.</text>
</comment>
<comment type="catalytic activity">
    <reaction evidence="1">
        <text>NAD(+) + ATP = ADP + NADP(+) + H(+)</text>
        <dbReference type="Rhea" id="RHEA:18629"/>
        <dbReference type="ChEBI" id="CHEBI:15378"/>
        <dbReference type="ChEBI" id="CHEBI:30616"/>
        <dbReference type="ChEBI" id="CHEBI:57540"/>
        <dbReference type="ChEBI" id="CHEBI:58349"/>
        <dbReference type="ChEBI" id="CHEBI:456216"/>
        <dbReference type="EC" id="2.7.1.23"/>
    </reaction>
</comment>
<comment type="cofactor">
    <cofactor evidence="1">
        <name>a divalent metal cation</name>
        <dbReference type="ChEBI" id="CHEBI:60240"/>
    </cofactor>
</comment>
<comment type="subcellular location">
    <subcellularLocation>
        <location evidence="1">Cytoplasm</location>
    </subcellularLocation>
</comment>
<comment type="similarity">
    <text evidence="1">Belongs to the NAD kinase family.</text>
</comment>
<name>NADK_RICRS</name>